<proteinExistence type="inferred from homology"/>
<dbReference type="EC" id="3.5.3.6" evidence="1"/>
<dbReference type="EMBL" id="FM204883">
    <property type="protein sequence ID" value="CAW92882.1"/>
    <property type="molecule type" value="Genomic_DNA"/>
</dbReference>
<dbReference type="RefSeq" id="WP_012679153.1">
    <property type="nucleotide sequence ID" value="NC_012471.1"/>
</dbReference>
<dbReference type="SMR" id="C0MBK4"/>
<dbReference type="KEGG" id="seu:SEQ_0597"/>
<dbReference type="HOGENOM" id="CLU_052662_0_1_9"/>
<dbReference type="OrthoDB" id="9807502at2"/>
<dbReference type="UniPathway" id="UPA00254">
    <property type="reaction ID" value="UER00364"/>
</dbReference>
<dbReference type="Proteomes" id="UP000001365">
    <property type="component" value="Chromosome"/>
</dbReference>
<dbReference type="GO" id="GO:0005737">
    <property type="term" value="C:cytoplasm"/>
    <property type="evidence" value="ECO:0007669"/>
    <property type="project" value="UniProtKB-SubCell"/>
</dbReference>
<dbReference type="GO" id="GO:0016990">
    <property type="term" value="F:arginine deiminase activity"/>
    <property type="evidence" value="ECO:0007669"/>
    <property type="project" value="UniProtKB-UniRule"/>
</dbReference>
<dbReference type="GO" id="GO:0019547">
    <property type="term" value="P:arginine catabolic process to ornithine"/>
    <property type="evidence" value="ECO:0007669"/>
    <property type="project" value="UniProtKB-UniRule"/>
</dbReference>
<dbReference type="GO" id="GO:0019546">
    <property type="term" value="P:arginine deiminase pathway"/>
    <property type="evidence" value="ECO:0007669"/>
    <property type="project" value="TreeGrafter"/>
</dbReference>
<dbReference type="Gene3D" id="1.10.3930.10">
    <property type="entry name" value="Arginine deiminase"/>
    <property type="match status" value="1"/>
</dbReference>
<dbReference type="Gene3D" id="3.75.10.10">
    <property type="entry name" value="L-arginine/glycine Amidinotransferase, Chain A"/>
    <property type="match status" value="1"/>
</dbReference>
<dbReference type="HAMAP" id="MF_00242">
    <property type="entry name" value="Arg_deiminase"/>
    <property type="match status" value="1"/>
</dbReference>
<dbReference type="InterPro" id="IPR003876">
    <property type="entry name" value="Arg_deiminase"/>
</dbReference>
<dbReference type="NCBIfam" id="TIGR01078">
    <property type="entry name" value="arcA"/>
    <property type="match status" value="1"/>
</dbReference>
<dbReference type="NCBIfam" id="NF002381">
    <property type="entry name" value="PRK01388.1"/>
    <property type="match status" value="1"/>
</dbReference>
<dbReference type="PANTHER" id="PTHR47271">
    <property type="entry name" value="ARGININE DEIMINASE"/>
    <property type="match status" value="1"/>
</dbReference>
<dbReference type="PANTHER" id="PTHR47271:SF2">
    <property type="entry name" value="ARGININE DEIMINASE"/>
    <property type="match status" value="1"/>
</dbReference>
<dbReference type="Pfam" id="PF02274">
    <property type="entry name" value="ADI"/>
    <property type="match status" value="1"/>
</dbReference>
<dbReference type="PIRSF" id="PIRSF006356">
    <property type="entry name" value="Arg_deiminase"/>
    <property type="match status" value="1"/>
</dbReference>
<dbReference type="PRINTS" id="PR01466">
    <property type="entry name" value="ARGDEIMINASE"/>
</dbReference>
<dbReference type="SUPFAM" id="SSF55909">
    <property type="entry name" value="Pentein"/>
    <property type="match status" value="1"/>
</dbReference>
<comment type="catalytic activity">
    <reaction evidence="1">
        <text>L-arginine + H2O = L-citrulline + NH4(+)</text>
        <dbReference type="Rhea" id="RHEA:19597"/>
        <dbReference type="ChEBI" id="CHEBI:15377"/>
        <dbReference type="ChEBI" id="CHEBI:28938"/>
        <dbReference type="ChEBI" id="CHEBI:32682"/>
        <dbReference type="ChEBI" id="CHEBI:57743"/>
        <dbReference type="EC" id="3.5.3.6"/>
    </reaction>
</comment>
<comment type="pathway">
    <text evidence="1">Amino-acid degradation; L-arginine degradation via ADI pathway; carbamoyl phosphate from L-arginine: step 1/2.</text>
</comment>
<comment type="subcellular location">
    <subcellularLocation>
        <location evidence="1">Cytoplasm</location>
    </subcellularLocation>
</comment>
<comment type="similarity">
    <text evidence="1">Belongs to the arginine deiminase family.</text>
</comment>
<accession>C0MBK4</accession>
<evidence type="ECO:0000255" key="1">
    <source>
        <dbReference type="HAMAP-Rule" id="MF_00242"/>
    </source>
</evidence>
<feature type="chain" id="PRO_1000125322" description="Arginine deiminase">
    <location>
        <begin position="1"/>
        <end position="411"/>
    </location>
</feature>
<feature type="active site" description="Amidino-cysteine intermediate" evidence="1">
    <location>
        <position position="401"/>
    </location>
</feature>
<organism>
    <name type="scientific">Streptococcus equi subsp. equi (strain 4047)</name>
    <dbReference type="NCBI Taxonomy" id="553482"/>
    <lineage>
        <taxon>Bacteria</taxon>
        <taxon>Bacillati</taxon>
        <taxon>Bacillota</taxon>
        <taxon>Bacilli</taxon>
        <taxon>Lactobacillales</taxon>
        <taxon>Streptococcaceae</taxon>
        <taxon>Streptococcus</taxon>
    </lineage>
</organism>
<reference key="1">
    <citation type="journal article" date="2009" name="PLoS Pathog.">
        <title>Genomic evidence for the evolution of Streptococcus equi: host restriction, increased virulence, and genetic exchange with human pathogens.</title>
        <authorList>
            <person name="Holden M.T.G."/>
            <person name="Heather Z."/>
            <person name="Paillot R."/>
            <person name="Steward K.F."/>
            <person name="Webb K."/>
            <person name="Ainslie F."/>
            <person name="Jourdan T."/>
            <person name="Bason N.C."/>
            <person name="Holroyd N.E."/>
            <person name="Mungall K."/>
            <person name="Quail M.A."/>
            <person name="Sanders M."/>
            <person name="Simmonds M."/>
            <person name="Willey D."/>
            <person name="Brooks K."/>
            <person name="Aanensen D.M."/>
            <person name="Spratt B.G."/>
            <person name="Jolley K.A."/>
            <person name="Maiden M.C.J."/>
            <person name="Kehoe M."/>
            <person name="Chanter N."/>
            <person name="Bentley S.D."/>
            <person name="Robinson C."/>
            <person name="Maskell D.J."/>
            <person name="Parkhill J."/>
            <person name="Waller A.S."/>
        </authorList>
    </citation>
    <scope>NUCLEOTIDE SEQUENCE [LARGE SCALE GENOMIC DNA]</scope>
    <source>
        <strain>4047</strain>
    </source>
</reference>
<sequence length="411" mass="46304">MTAQTPIHVYSEIGKLKKVLLHRPGKEIENLMPDYLERLLFDDIPFLEDAQKEHDAFAQALRDEGVEVLYLETLAAESLVTPEIREAFIDEYLSEANIRGRATKKAIRELLMSIEDNQELIEKTMAGVQKSELPEIPAAEKGLTDLVESSYPFAIDPMPNLYFTRDPFATIGTGVSLNHMFSETRNRETIYGKYIFTHHPIYGGGKVPMVYDRNETTRIEGGDELVLSKDVLAVGISQRTDAASIEKLLVNIFKQNLGFKKVLAFEFANNRKFMHLDTVFTMVDYDKFTIHPEIEGDLRVYSVTYENEELRIVEETGDLAELLAANLGVERVELIRCGGDNLVAAGREQWNDGSNTLTIAPGVVVVYNRNTITNAILESKGLKLIKIHGSELVRGRGGPRCMSMPFEREDI</sequence>
<protein>
    <recommendedName>
        <fullName evidence="1">Arginine deiminase</fullName>
        <shortName evidence="1">ADI</shortName>
        <ecNumber evidence="1">3.5.3.6</ecNumber>
    </recommendedName>
    <alternativeName>
        <fullName evidence="1">Arginine dihydrolase</fullName>
        <shortName evidence="1">AD</shortName>
    </alternativeName>
</protein>
<gene>
    <name evidence="1" type="primary">arcA</name>
    <name type="ordered locus">SEQ_0597</name>
</gene>
<name>ARCA_STRE4</name>
<keyword id="KW-0056">Arginine metabolism</keyword>
<keyword id="KW-0963">Cytoplasm</keyword>
<keyword id="KW-0378">Hydrolase</keyword>